<protein>
    <recommendedName>
        <fullName>Ubiquitin-conjugating enzyme E2 J2-like</fullName>
        <ecNumber>2.3.2.23</ecNumber>
    </recommendedName>
    <alternativeName>
        <fullName>E2 ubiquitin-conjugating enzyme J2-like</fullName>
    </alternativeName>
</protein>
<proteinExistence type="inferred from homology"/>
<name>UB2JL_DICDI</name>
<organism>
    <name type="scientific">Dictyostelium discoideum</name>
    <name type="common">Social amoeba</name>
    <dbReference type="NCBI Taxonomy" id="44689"/>
    <lineage>
        <taxon>Eukaryota</taxon>
        <taxon>Amoebozoa</taxon>
        <taxon>Evosea</taxon>
        <taxon>Eumycetozoa</taxon>
        <taxon>Dictyostelia</taxon>
        <taxon>Dictyosteliales</taxon>
        <taxon>Dictyosteliaceae</taxon>
        <taxon>Dictyostelium</taxon>
    </lineage>
</organism>
<keyword id="KW-0067">ATP-binding</keyword>
<keyword id="KW-0547">Nucleotide-binding</keyword>
<keyword id="KW-1185">Reference proteome</keyword>
<keyword id="KW-0808">Transferase</keyword>
<keyword id="KW-0833">Ubl conjugation pathway</keyword>
<accession>Q54AK6</accession>
<gene>
    <name type="ORF">DDB_G0294380</name>
</gene>
<evidence type="ECO:0000255" key="1">
    <source>
        <dbReference type="PROSITE-ProRule" id="PRU00388"/>
    </source>
</evidence>
<dbReference type="EC" id="2.3.2.23"/>
<dbReference type="EMBL" id="AAFI02000260">
    <property type="protein sequence ID" value="EAL60294.1"/>
    <property type="molecule type" value="Genomic_DNA"/>
</dbReference>
<dbReference type="RefSeq" id="XP_628707.1">
    <property type="nucleotide sequence ID" value="XM_628705.1"/>
</dbReference>
<dbReference type="SMR" id="Q54AK6"/>
<dbReference type="FunCoup" id="Q54AK6">
    <property type="interactions" value="550"/>
</dbReference>
<dbReference type="STRING" id="44689.Q54AK6"/>
<dbReference type="PaxDb" id="44689-DDB0238760"/>
<dbReference type="EnsemblProtists" id="EAL60294">
    <property type="protein sequence ID" value="EAL60294"/>
    <property type="gene ID" value="DDB_G0294380"/>
</dbReference>
<dbReference type="GeneID" id="3385371"/>
<dbReference type="KEGG" id="ddi:DDB_G0294380"/>
<dbReference type="dictyBase" id="DDB_G0294380"/>
<dbReference type="VEuPathDB" id="AmoebaDB:DDB_G0294380"/>
<dbReference type="eggNOG" id="KOG0894">
    <property type="taxonomic scope" value="Eukaryota"/>
</dbReference>
<dbReference type="HOGENOM" id="CLU_041481_1_3_1"/>
<dbReference type="InParanoid" id="Q54AK6"/>
<dbReference type="OMA" id="GWSVATI"/>
<dbReference type="PhylomeDB" id="Q54AK6"/>
<dbReference type="UniPathway" id="UPA00143"/>
<dbReference type="PRO" id="PR:Q54AK6"/>
<dbReference type="Proteomes" id="UP000002195">
    <property type="component" value="Unassembled WGS sequence"/>
</dbReference>
<dbReference type="GO" id="GO:0005783">
    <property type="term" value="C:endoplasmic reticulum"/>
    <property type="evidence" value="ECO:0000318"/>
    <property type="project" value="GO_Central"/>
</dbReference>
<dbReference type="GO" id="GO:0005634">
    <property type="term" value="C:nucleus"/>
    <property type="evidence" value="ECO:0000318"/>
    <property type="project" value="GO_Central"/>
</dbReference>
<dbReference type="GO" id="GO:0005524">
    <property type="term" value="F:ATP binding"/>
    <property type="evidence" value="ECO:0007669"/>
    <property type="project" value="UniProtKB-KW"/>
</dbReference>
<dbReference type="GO" id="GO:0061631">
    <property type="term" value="F:ubiquitin conjugating enzyme activity"/>
    <property type="evidence" value="ECO:0000318"/>
    <property type="project" value="GO_Central"/>
</dbReference>
<dbReference type="GO" id="GO:0036503">
    <property type="term" value="P:ERAD pathway"/>
    <property type="evidence" value="ECO:0000318"/>
    <property type="project" value="GO_Central"/>
</dbReference>
<dbReference type="GO" id="GO:0000209">
    <property type="term" value="P:protein polyubiquitination"/>
    <property type="evidence" value="ECO:0000318"/>
    <property type="project" value="GO_Central"/>
</dbReference>
<dbReference type="CDD" id="cd23799">
    <property type="entry name" value="UBCc_UBE2J"/>
    <property type="match status" value="1"/>
</dbReference>
<dbReference type="FunFam" id="3.10.110.10:FF:000109">
    <property type="entry name" value="Ubiquitin-conjugating enzyme E2 J2-like"/>
    <property type="match status" value="1"/>
</dbReference>
<dbReference type="Gene3D" id="3.10.110.10">
    <property type="entry name" value="Ubiquitin Conjugating Enzyme"/>
    <property type="match status" value="1"/>
</dbReference>
<dbReference type="InterPro" id="IPR050113">
    <property type="entry name" value="Ub_conjugating_enzyme"/>
</dbReference>
<dbReference type="InterPro" id="IPR000608">
    <property type="entry name" value="UBQ-conjugat_E2_core"/>
</dbReference>
<dbReference type="InterPro" id="IPR016135">
    <property type="entry name" value="UBQ-conjugating_enzyme/RWD"/>
</dbReference>
<dbReference type="PANTHER" id="PTHR24067">
    <property type="entry name" value="UBIQUITIN-CONJUGATING ENZYME E2"/>
    <property type="match status" value="1"/>
</dbReference>
<dbReference type="Pfam" id="PF00179">
    <property type="entry name" value="UQ_con"/>
    <property type="match status" value="1"/>
</dbReference>
<dbReference type="SMART" id="SM00212">
    <property type="entry name" value="UBCc"/>
    <property type="match status" value="1"/>
</dbReference>
<dbReference type="SUPFAM" id="SSF54495">
    <property type="entry name" value="UBC-like"/>
    <property type="match status" value="1"/>
</dbReference>
<dbReference type="PROSITE" id="PS50127">
    <property type="entry name" value="UBC_2"/>
    <property type="match status" value="1"/>
</dbReference>
<feature type="chain" id="PRO_0000328488" description="Ubiquitin-conjugating enzyme E2 J2-like">
    <location>
        <begin position="1"/>
        <end position="170"/>
    </location>
</feature>
<feature type="domain" description="UBC core" evidence="1">
    <location>
        <begin position="15"/>
        <end position="165"/>
    </location>
</feature>
<feature type="active site" description="Glycyl thioester intermediate" evidence="1">
    <location>
        <position position="97"/>
    </location>
</feature>
<comment type="function">
    <text evidence="1">Catalyzes the covalent attachment of ubiquitin to other proteins.</text>
</comment>
<comment type="catalytic activity">
    <reaction evidence="1">
        <text>S-ubiquitinyl-[E1 ubiquitin-activating enzyme]-L-cysteine + [E2 ubiquitin-conjugating enzyme]-L-cysteine = [E1 ubiquitin-activating enzyme]-L-cysteine + S-ubiquitinyl-[E2 ubiquitin-conjugating enzyme]-L-cysteine.</text>
        <dbReference type="EC" id="2.3.2.23"/>
    </reaction>
</comment>
<comment type="pathway">
    <text evidence="1">Protein modification; protein ubiquitination.</text>
</comment>
<comment type="similarity">
    <text evidence="1">Belongs to the ubiquitin-conjugating enzyme family.</text>
</comment>
<reference key="1">
    <citation type="journal article" date="2005" name="Nature">
        <title>The genome of the social amoeba Dictyostelium discoideum.</title>
        <authorList>
            <person name="Eichinger L."/>
            <person name="Pachebat J.A."/>
            <person name="Gloeckner G."/>
            <person name="Rajandream M.A."/>
            <person name="Sucgang R."/>
            <person name="Berriman M."/>
            <person name="Song J."/>
            <person name="Olsen R."/>
            <person name="Szafranski K."/>
            <person name="Xu Q."/>
            <person name="Tunggal B."/>
            <person name="Kummerfeld S."/>
            <person name="Madera M."/>
            <person name="Konfortov B.A."/>
            <person name="Rivero F."/>
            <person name="Bankier A.T."/>
            <person name="Lehmann R."/>
            <person name="Hamlin N."/>
            <person name="Davies R."/>
            <person name="Gaudet P."/>
            <person name="Fey P."/>
            <person name="Pilcher K."/>
            <person name="Chen G."/>
            <person name="Saunders D."/>
            <person name="Sodergren E.J."/>
            <person name="Davis P."/>
            <person name="Kerhornou A."/>
            <person name="Nie X."/>
            <person name="Hall N."/>
            <person name="Anjard C."/>
            <person name="Hemphill L."/>
            <person name="Bason N."/>
            <person name="Farbrother P."/>
            <person name="Desany B."/>
            <person name="Just E."/>
            <person name="Morio T."/>
            <person name="Rost R."/>
            <person name="Churcher C.M."/>
            <person name="Cooper J."/>
            <person name="Haydock S."/>
            <person name="van Driessche N."/>
            <person name="Cronin A."/>
            <person name="Goodhead I."/>
            <person name="Muzny D.M."/>
            <person name="Mourier T."/>
            <person name="Pain A."/>
            <person name="Lu M."/>
            <person name="Harper D."/>
            <person name="Lindsay R."/>
            <person name="Hauser H."/>
            <person name="James K.D."/>
            <person name="Quiles M."/>
            <person name="Madan Babu M."/>
            <person name="Saito T."/>
            <person name="Buchrieser C."/>
            <person name="Wardroper A."/>
            <person name="Felder M."/>
            <person name="Thangavelu M."/>
            <person name="Johnson D."/>
            <person name="Knights A."/>
            <person name="Loulseged H."/>
            <person name="Mungall K.L."/>
            <person name="Oliver K."/>
            <person name="Price C."/>
            <person name="Quail M.A."/>
            <person name="Urushihara H."/>
            <person name="Hernandez J."/>
            <person name="Rabbinowitsch E."/>
            <person name="Steffen D."/>
            <person name="Sanders M."/>
            <person name="Ma J."/>
            <person name="Kohara Y."/>
            <person name="Sharp S."/>
            <person name="Simmonds M.N."/>
            <person name="Spiegler S."/>
            <person name="Tivey A."/>
            <person name="Sugano S."/>
            <person name="White B."/>
            <person name="Walker D."/>
            <person name="Woodward J.R."/>
            <person name="Winckler T."/>
            <person name="Tanaka Y."/>
            <person name="Shaulsky G."/>
            <person name="Schleicher M."/>
            <person name="Weinstock G.M."/>
            <person name="Rosenthal A."/>
            <person name="Cox E.C."/>
            <person name="Chisholm R.L."/>
            <person name="Gibbs R.A."/>
            <person name="Loomis W.F."/>
            <person name="Platzer M."/>
            <person name="Kay R.R."/>
            <person name="Williams J.G."/>
            <person name="Dear P.H."/>
            <person name="Noegel A.A."/>
            <person name="Barrell B.G."/>
            <person name="Kuspa A."/>
        </authorList>
    </citation>
    <scope>NUCLEOTIDE SEQUENCE [LARGE SCALE GENOMIC DNA]</scope>
    <source>
        <strain>AX4</strain>
    </source>
</reference>
<sequence length="170" mass="19335">MSEHNSDIVHPPTKDCITRLKREFQEISKNPIENILVTPSPSNILEWHYVILGASNTPYEGGVYYGQLIFKYNYPLSPPSILMTTPSGRFETQKRLCLSISDYHPESWSPSWSTSSILLGLLSFMSDNEVTAGSIVTTNDEKRILATKSMDFNKKNKTFCELFPYLAMDE</sequence>